<reference key="1">
    <citation type="journal article" date="2002" name="Nature">
        <title>Sequence and analysis of rice chromosome 4.</title>
        <authorList>
            <person name="Feng Q."/>
            <person name="Zhang Y."/>
            <person name="Hao P."/>
            <person name="Wang S."/>
            <person name="Fu G."/>
            <person name="Huang Y."/>
            <person name="Li Y."/>
            <person name="Zhu J."/>
            <person name="Liu Y."/>
            <person name="Hu X."/>
            <person name="Jia P."/>
            <person name="Zhang Y."/>
            <person name="Zhao Q."/>
            <person name="Ying K."/>
            <person name="Yu S."/>
            <person name="Tang Y."/>
            <person name="Weng Q."/>
            <person name="Zhang L."/>
            <person name="Lu Y."/>
            <person name="Mu J."/>
            <person name="Lu Y."/>
            <person name="Zhang L.S."/>
            <person name="Yu Z."/>
            <person name="Fan D."/>
            <person name="Liu X."/>
            <person name="Lu T."/>
            <person name="Li C."/>
            <person name="Wu Y."/>
            <person name="Sun T."/>
            <person name="Lei H."/>
            <person name="Li T."/>
            <person name="Hu H."/>
            <person name="Guan J."/>
            <person name="Wu M."/>
            <person name="Zhang R."/>
            <person name="Zhou B."/>
            <person name="Chen Z."/>
            <person name="Chen L."/>
            <person name="Jin Z."/>
            <person name="Wang R."/>
            <person name="Yin H."/>
            <person name="Cai Z."/>
            <person name="Ren S."/>
            <person name="Lv G."/>
            <person name="Gu W."/>
            <person name="Zhu G."/>
            <person name="Tu Y."/>
            <person name="Jia J."/>
            <person name="Zhang Y."/>
            <person name="Chen J."/>
            <person name="Kang H."/>
            <person name="Chen X."/>
            <person name="Shao C."/>
            <person name="Sun Y."/>
            <person name="Hu Q."/>
            <person name="Zhang X."/>
            <person name="Zhang W."/>
            <person name="Wang L."/>
            <person name="Ding C."/>
            <person name="Sheng H."/>
            <person name="Gu J."/>
            <person name="Chen S."/>
            <person name="Ni L."/>
            <person name="Zhu F."/>
            <person name="Chen W."/>
            <person name="Lan L."/>
            <person name="Lai Y."/>
            <person name="Cheng Z."/>
            <person name="Gu M."/>
            <person name="Jiang J."/>
            <person name="Li J."/>
            <person name="Hong G."/>
            <person name="Xue Y."/>
            <person name="Han B."/>
        </authorList>
    </citation>
    <scope>NUCLEOTIDE SEQUENCE [LARGE SCALE GENOMIC DNA]</scope>
    <source>
        <strain>cv. Guang-Lu-Ai No.4</strain>
    </source>
</reference>
<reference key="2">
    <citation type="journal article" date="2005" name="PLoS Biol.">
        <title>The genomes of Oryza sativa: a history of duplications.</title>
        <authorList>
            <person name="Yu J."/>
            <person name="Wang J."/>
            <person name="Lin W."/>
            <person name="Li S."/>
            <person name="Li H."/>
            <person name="Zhou J."/>
            <person name="Ni P."/>
            <person name="Dong W."/>
            <person name="Hu S."/>
            <person name="Zeng C."/>
            <person name="Zhang J."/>
            <person name="Zhang Y."/>
            <person name="Li R."/>
            <person name="Xu Z."/>
            <person name="Li S."/>
            <person name="Li X."/>
            <person name="Zheng H."/>
            <person name="Cong L."/>
            <person name="Lin L."/>
            <person name="Yin J."/>
            <person name="Geng J."/>
            <person name="Li G."/>
            <person name="Shi J."/>
            <person name="Liu J."/>
            <person name="Lv H."/>
            <person name="Li J."/>
            <person name="Wang J."/>
            <person name="Deng Y."/>
            <person name="Ran L."/>
            <person name="Shi X."/>
            <person name="Wang X."/>
            <person name="Wu Q."/>
            <person name="Li C."/>
            <person name="Ren X."/>
            <person name="Wang J."/>
            <person name="Wang X."/>
            <person name="Li D."/>
            <person name="Liu D."/>
            <person name="Zhang X."/>
            <person name="Ji Z."/>
            <person name="Zhao W."/>
            <person name="Sun Y."/>
            <person name="Zhang Z."/>
            <person name="Bao J."/>
            <person name="Han Y."/>
            <person name="Dong L."/>
            <person name="Ji J."/>
            <person name="Chen P."/>
            <person name="Wu S."/>
            <person name="Liu J."/>
            <person name="Xiao Y."/>
            <person name="Bu D."/>
            <person name="Tan J."/>
            <person name="Yang L."/>
            <person name="Ye C."/>
            <person name="Zhang J."/>
            <person name="Xu J."/>
            <person name="Zhou Y."/>
            <person name="Yu Y."/>
            <person name="Zhang B."/>
            <person name="Zhuang S."/>
            <person name="Wei H."/>
            <person name="Liu B."/>
            <person name="Lei M."/>
            <person name="Yu H."/>
            <person name="Li Y."/>
            <person name="Xu H."/>
            <person name="Wei S."/>
            <person name="He X."/>
            <person name="Fang L."/>
            <person name="Zhang Z."/>
            <person name="Zhang Y."/>
            <person name="Huang X."/>
            <person name="Su Z."/>
            <person name="Tong W."/>
            <person name="Li J."/>
            <person name="Tong Z."/>
            <person name="Li S."/>
            <person name="Ye J."/>
            <person name="Wang L."/>
            <person name="Fang L."/>
            <person name="Lei T."/>
            <person name="Chen C.-S."/>
            <person name="Chen H.-C."/>
            <person name="Xu Z."/>
            <person name="Li H."/>
            <person name="Huang H."/>
            <person name="Zhang F."/>
            <person name="Xu H."/>
            <person name="Li N."/>
            <person name="Zhao C."/>
            <person name="Li S."/>
            <person name="Dong L."/>
            <person name="Huang Y."/>
            <person name="Li L."/>
            <person name="Xi Y."/>
            <person name="Qi Q."/>
            <person name="Li W."/>
            <person name="Zhang B."/>
            <person name="Hu W."/>
            <person name="Zhang Y."/>
            <person name="Tian X."/>
            <person name="Jiao Y."/>
            <person name="Liang X."/>
            <person name="Jin J."/>
            <person name="Gao L."/>
            <person name="Zheng W."/>
            <person name="Hao B."/>
            <person name="Liu S.-M."/>
            <person name="Wang W."/>
            <person name="Yuan L."/>
            <person name="Cao M."/>
            <person name="McDermott J."/>
            <person name="Samudrala R."/>
            <person name="Wang J."/>
            <person name="Wong G.K.-S."/>
            <person name="Yang H."/>
        </authorList>
    </citation>
    <scope>NUCLEOTIDE SEQUENCE [LARGE SCALE GENOMIC DNA]</scope>
    <source>
        <strain>cv. 93-11</strain>
    </source>
</reference>
<sequence>MAGAASPDHLFGLRYSFYVGAYQAVITGVQAIPARAALSPDALAERDSLLYRSYIAIGSHQLVIDEIGPGAATPLQAVRLLAVYLSGGAGGKESAIRKLNELLADDAVGSNPILRLVAGTVLMHERDYAGALKHTNSGGTMELLAMNVQICLQMHRSDHAEKQLRIMQQLDEDHTLTQLANAWVDLVMGGSKIQEAHLIFQDLSEKYPATCLILNGKALCLMHMGNFEDAEGLLLESLNKDAKDAETLANLVVCSLNLGKSASRYLNQLKLAHPDHMLVKRMSSAEDSFDRACQAIS</sequence>
<organism>
    <name type="scientific">Oryza sativa subsp. indica</name>
    <name type="common">Rice</name>
    <dbReference type="NCBI Taxonomy" id="39946"/>
    <lineage>
        <taxon>Eukaryota</taxon>
        <taxon>Viridiplantae</taxon>
        <taxon>Streptophyta</taxon>
        <taxon>Embryophyta</taxon>
        <taxon>Tracheophyta</taxon>
        <taxon>Spermatophyta</taxon>
        <taxon>Magnoliopsida</taxon>
        <taxon>Liliopsida</taxon>
        <taxon>Poales</taxon>
        <taxon>Poaceae</taxon>
        <taxon>BOP clade</taxon>
        <taxon>Oryzoideae</taxon>
        <taxon>Oryzeae</taxon>
        <taxon>Oryzinae</taxon>
        <taxon>Oryza</taxon>
        <taxon>Oryza sativa</taxon>
    </lineage>
</organism>
<proteinExistence type="inferred from homology"/>
<gene>
    <name type="ORF">H0413E07.10</name>
    <name type="ORF">OsI_017016</name>
</gene>
<dbReference type="EMBL" id="AL732331">
    <property type="protein sequence ID" value="CAJ86157.1"/>
    <property type="molecule type" value="Genomic_DNA"/>
</dbReference>
<dbReference type="EMBL" id="CM000129">
    <property type="protein sequence ID" value="EAY95783.1"/>
    <property type="molecule type" value="Genomic_DNA"/>
</dbReference>
<dbReference type="SMR" id="A2XY73"/>
<dbReference type="STRING" id="39946.A2XY73"/>
<dbReference type="EnsemblPlants" id="OsGoSa_04g0028090.01">
    <property type="protein sequence ID" value="OsGoSa_04g0028090.01"/>
    <property type="gene ID" value="OsGoSa_04g0028090"/>
</dbReference>
<dbReference type="EnsemblPlants" id="OsIR64_04g0027710.01">
    <property type="protein sequence ID" value="OsIR64_04g0027710.01"/>
    <property type="gene ID" value="OsIR64_04g0027710"/>
</dbReference>
<dbReference type="EnsemblPlants" id="OsKYG_04g0027990.01">
    <property type="protein sequence ID" value="OsKYG_04g0027990.01"/>
    <property type="gene ID" value="OsKYG_04g0027990"/>
</dbReference>
<dbReference type="EnsemblPlants" id="OsLaMu_04g0028650.01">
    <property type="protein sequence ID" value="OsLaMu_04g0028650.01"/>
    <property type="gene ID" value="OsLaMu_04g0028650"/>
</dbReference>
<dbReference type="EnsemblPlants" id="OsLima_04g0028150.01">
    <property type="protein sequence ID" value="OsLima_04g0028150.01"/>
    <property type="gene ID" value="OsLima_04g0028150"/>
</dbReference>
<dbReference type="EnsemblPlants" id="OsLiXu_04g0028690.01">
    <property type="protein sequence ID" value="OsLiXu_04g0028690.01"/>
    <property type="gene ID" value="OsLiXu_04g0028690"/>
</dbReference>
<dbReference type="EnsemblPlants" id="OsMH63_04G029070_01">
    <property type="protein sequence ID" value="OsMH63_04G029070_01"/>
    <property type="gene ID" value="OsMH63_04G029070"/>
</dbReference>
<dbReference type="EnsemblPlants" id="OsPr106_04g0029060.01">
    <property type="protein sequence ID" value="OsPr106_04g0029060.01"/>
    <property type="gene ID" value="OsPr106_04g0029060"/>
</dbReference>
<dbReference type="EnsemblPlants" id="OsZS97_04G029210_01">
    <property type="protein sequence ID" value="OsZS97_04G029210_01"/>
    <property type="gene ID" value="OsZS97_04G029210"/>
</dbReference>
<dbReference type="Gramene" id="OsGoSa_04g0028090.01">
    <property type="protein sequence ID" value="OsGoSa_04g0028090.01"/>
    <property type="gene ID" value="OsGoSa_04g0028090"/>
</dbReference>
<dbReference type="Gramene" id="OsIR64_04g0027710.01">
    <property type="protein sequence ID" value="OsIR64_04g0027710.01"/>
    <property type="gene ID" value="OsIR64_04g0027710"/>
</dbReference>
<dbReference type="Gramene" id="OsKYG_04g0027990.01">
    <property type="protein sequence ID" value="OsKYG_04g0027990.01"/>
    <property type="gene ID" value="OsKYG_04g0027990"/>
</dbReference>
<dbReference type="Gramene" id="OsLaMu_04g0028650.01">
    <property type="protein sequence ID" value="OsLaMu_04g0028650.01"/>
    <property type="gene ID" value="OsLaMu_04g0028650"/>
</dbReference>
<dbReference type="Gramene" id="OsLima_04g0028150.01">
    <property type="protein sequence ID" value="OsLima_04g0028150.01"/>
    <property type="gene ID" value="OsLima_04g0028150"/>
</dbReference>
<dbReference type="Gramene" id="OsLiXu_04g0028690.01">
    <property type="protein sequence ID" value="OsLiXu_04g0028690.01"/>
    <property type="gene ID" value="OsLiXu_04g0028690"/>
</dbReference>
<dbReference type="Gramene" id="OsMH63_04G029070_01">
    <property type="protein sequence ID" value="OsMH63_04G029070_01"/>
    <property type="gene ID" value="OsMH63_04G029070"/>
</dbReference>
<dbReference type="Gramene" id="OsPr106_04g0029060.01">
    <property type="protein sequence ID" value="OsPr106_04g0029060.01"/>
    <property type="gene ID" value="OsPr106_04g0029060"/>
</dbReference>
<dbReference type="Gramene" id="OsZS97_04G029210_01">
    <property type="protein sequence ID" value="OsZS97_04G029210_01"/>
    <property type="gene ID" value="OsZS97_04G029210"/>
</dbReference>
<dbReference type="HOGENOM" id="CLU_049363_0_0_1"/>
<dbReference type="OrthoDB" id="310217at2759"/>
<dbReference type="Proteomes" id="UP000007015">
    <property type="component" value="Chromosome 4"/>
</dbReference>
<dbReference type="GO" id="GO:0030126">
    <property type="term" value="C:COPI vesicle coat"/>
    <property type="evidence" value="ECO:0007669"/>
    <property type="project" value="TreeGrafter"/>
</dbReference>
<dbReference type="GO" id="GO:0000139">
    <property type="term" value="C:Golgi membrane"/>
    <property type="evidence" value="ECO:0007669"/>
    <property type="project" value="UniProtKB-SubCell"/>
</dbReference>
<dbReference type="GO" id="GO:0005198">
    <property type="term" value="F:structural molecule activity"/>
    <property type="evidence" value="ECO:0007669"/>
    <property type="project" value="InterPro"/>
</dbReference>
<dbReference type="GO" id="GO:0006888">
    <property type="term" value="P:endoplasmic reticulum to Golgi vesicle-mediated transport"/>
    <property type="evidence" value="ECO:0007669"/>
    <property type="project" value="TreeGrafter"/>
</dbReference>
<dbReference type="GO" id="GO:0006891">
    <property type="term" value="P:intra-Golgi vesicle-mediated transport"/>
    <property type="evidence" value="ECO:0007669"/>
    <property type="project" value="TreeGrafter"/>
</dbReference>
<dbReference type="GO" id="GO:0015031">
    <property type="term" value="P:protein transport"/>
    <property type="evidence" value="ECO:0007669"/>
    <property type="project" value="UniProtKB-KW"/>
</dbReference>
<dbReference type="GO" id="GO:0006890">
    <property type="term" value="P:retrograde vesicle-mediated transport, Golgi to endoplasmic reticulum"/>
    <property type="evidence" value="ECO:0007669"/>
    <property type="project" value="InterPro"/>
</dbReference>
<dbReference type="FunFam" id="1.25.40.10:FF:000140">
    <property type="entry name" value="Coatomer subunit epsilon"/>
    <property type="match status" value="1"/>
</dbReference>
<dbReference type="Gene3D" id="1.25.40.10">
    <property type="entry name" value="Tetratricopeptide repeat domain"/>
    <property type="match status" value="1"/>
</dbReference>
<dbReference type="InterPro" id="IPR006822">
    <property type="entry name" value="Coatomer_esu"/>
</dbReference>
<dbReference type="InterPro" id="IPR011990">
    <property type="entry name" value="TPR-like_helical_dom_sf"/>
</dbReference>
<dbReference type="PANTHER" id="PTHR10805">
    <property type="entry name" value="COATOMER SUBUNIT EPSILON"/>
    <property type="match status" value="1"/>
</dbReference>
<dbReference type="PANTHER" id="PTHR10805:SF2">
    <property type="entry name" value="COATOMER SUBUNIT EPSILON-2"/>
    <property type="match status" value="1"/>
</dbReference>
<dbReference type="Pfam" id="PF04733">
    <property type="entry name" value="Coatomer_E"/>
    <property type="match status" value="1"/>
</dbReference>
<dbReference type="PIRSF" id="PIRSF016478">
    <property type="entry name" value="Coatomer_esu"/>
    <property type="match status" value="1"/>
</dbReference>
<dbReference type="SUPFAM" id="SSF48452">
    <property type="entry name" value="TPR-like"/>
    <property type="match status" value="1"/>
</dbReference>
<protein>
    <recommendedName>
        <fullName>Coatomer subunit epsilon-2</fullName>
    </recommendedName>
    <alternativeName>
        <fullName>Epsilon-coat protein 2</fullName>
        <shortName>Epsilon-COP 2</shortName>
    </alternativeName>
</protein>
<accession>A2XY73</accession>
<accession>Q25A84</accession>
<accession>Q7XTM6</accession>
<comment type="function">
    <text evidence="1">The coatomer is a cytosolic protein complex that binds to dilysine motifs and reversibly associates with Golgi non-clathrin-coated vesicles, which further mediate biosynthetic protein transport from the ER, via the Golgi up to the trans Golgi network. The coatomer complex is required for budding from Golgi membranes, and is essential for the retrograde Golgi-to-ER transport of dilysine-tagged proteins (By similarity).</text>
</comment>
<comment type="subunit">
    <text evidence="1">Oligomeric complex that consists of at least the alpha, beta, beta', gamma, delta, epsilon and zeta subunits.</text>
</comment>
<comment type="subcellular location">
    <subcellularLocation>
        <location evidence="1">Cytoplasm</location>
    </subcellularLocation>
    <subcellularLocation>
        <location evidence="1">Golgi apparatus membrane</location>
        <topology evidence="1">Peripheral membrane protein</topology>
        <orientation evidence="1">Cytoplasmic side</orientation>
    </subcellularLocation>
    <subcellularLocation>
        <location evidence="1">Cytoplasmic vesicle</location>
        <location evidence="1">COPI-coated vesicle membrane</location>
        <topology evidence="1">Peripheral membrane protein</topology>
        <orientation evidence="1">Cytoplasmic side</orientation>
    </subcellularLocation>
    <text evidence="1">The coatomer is cytoplasmic or polymerized on the cytoplasmic side of the Golgi, as well as on the vesicles/buds originating from it.</text>
</comment>
<comment type="similarity">
    <text evidence="2">Belongs to the COPE family.</text>
</comment>
<keyword id="KW-0963">Cytoplasm</keyword>
<keyword id="KW-0968">Cytoplasmic vesicle</keyword>
<keyword id="KW-0931">ER-Golgi transport</keyword>
<keyword id="KW-0333">Golgi apparatus</keyword>
<keyword id="KW-0472">Membrane</keyword>
<keyword id="KW-0653">Protein transport</keyword>
<keyword id="KW-1185">Reference proteome</keyword>
<keyword id="KW-0813">Transport</keyword>
<feature type="chain" id="PRO_0000291460" description="Coatomer subunit epsilon-2">
    <location>
        <begin position="1"/>
        <end position="297"/>
    </location>
</feature>
<feature type="sequence conflict" description="In Ref. 2; EAY95783." evidence="2" ref="2">
    <original>A</original>
    <variation>T</variation>
    <location>
        <position position="82"/>
    </location>
</feature>
<name>COPE2_ORYSI</name>
<evidence type="ECO:0000250" key="1"/>
<evidence type="ECO:0000305" key="2"/>